<evidence type="ECO:0000250" key="1">
    <source>
        <dbReference type="UniProtKB" id="P02768"/>
    </source>
</evidence>
<evidence type="ECO:0000250" key="2">
    <source>
        <dbReference type="UniProtKB" id="P02769"/>
    </source>
</evidence>
<evidence type="ECO:0000250" key="3">
    <source>
        <dbReference type="UniProtKB" id="P07724"/>
    </source>
</evidence>
<evidence type="ECO:0000255" key="4">
    <source>
        <dbReference type="PROSITE-ProRule" id="PRU00769"/>
    </source>
</evidence>
<evidence type="ECO:0000269" key="5">
    <source>
    </source>
</evidence>
<evidence type="ECO:0000303" key="6">
    <source>
    </source>
</evidence>
<evidence type="ECO:0000305" key="7"/>
<reference evidence="7" key="1">
    <citation type="journal article" date="2014" name="Acta Vet. Scand.">
        <title>Identification of pregnancy-associated glycoproteins and alpha-fetoprotein in fallow deer (Dama dama) placenta.</title>
        <authorList>
            <person name="Beriot M."/>
            <person name="Tchimbou A.F."/>
            <person name="Barbato O."/>
            <person name="Beckers J.F."/>
            <person name="de Sousa N.M."/>
        </authorList>
    </citation>
    <scope>PROTEIN SEQUENCE</scope>
    <scope>TISSUE SPECIFICITY</scope>
    <source>
        <tissue evidence="5">Placenta</tissue>
    </source>
</reference>
<feature type="chain" id="PRO_0000423369" description="Serum albumin" evidence="5">
    <location>
        <begin position="1"/>
        <end position="10" status="greater than"/>
    </location>
</feature>
<feature type="binding site" evidence="2">
    <location>
        <position position="6"/>
    </location>
    <ligand>
        <name>Ca(2+)</name>
        <dbReference type="ChEBI" id="CHEBI:29108"/>
        <label>1</label>
    </ligand>
</feature>
<feature type="modified residue" description="Phosphoserine" evidence="1">
    <location>
        <position position="5"/>
    </location>
</feature>
<feature type="non-terminal residue" evidence="6">
    <location>
        <position position="10"/>
    </location>
</feature>
<name>ALBU_DAMDA</name>
<keyword id="KW-0106">Calcium</keyword>
<keyword id="KW-0903">Direct protein sequencing</keyword>
<keyword id="KW-0446">Lipid-binding</keyword>
<keyword id="KW-0479">Metal-binding</keyword>
<keyword id="KW-0597">Phosphoprotein</keyword>
<keyword id="KW-0964">Secreted</keyword>
<keyword id="KW-0862">Zinc</keyword>
<proteinExistence type="evidence at protein level"/>
<comment type="function">
    <text evidence="1 2">Serum albumin, the main protein of plasma, has a good binding capacity for water, Ca(2+), Na(+), K(+), fatty acids, hormones, bilirubin and drugs (By similarity). Its main function is the regulation of the colloidal osmotic pressure of blood (By similarity). Major zinc transporter in plasma, typically binds about 80% of all plasma zinc (By similarity). Major calcium and magnesium transporter in plasma, binds approximately 45% of circulating calcium and magnesium in plasma (By similarity). Potentially has more than two calcium-binding sites and might additionally bind calcium in a non-specific manner (By similarity). The shared binding site between zinc and calcium suggests a crosstalk between zinc and calcium transport in the blood (By similarity). The rank order of affinity is zinc &gt; calcium &gt; magnesium (By similarity). Binds to the bacterial siderophore enterobactin and inhibits enterobactin-mediated iron uptake of E.coli from ferric transferrin, and may thereby limit the utilization of iron and growth of enteric bacteria such as E.coli (By similarity). Does not prevent iron uptake by the bacterial siderophore aerobactin (By similarity).</text>
</comment>
<comment type="subunit">
    <text evidence="1 3">Interacts with FCGRT; this interaction regulates ALB homeostasis (By similarity). Interacts with TASOR (By similarity). In plasma, occurs in a covalently-linked complex with chromophore-bound alpha-1-microglobulin; this interaction does not prevent fatty acid binding to ALB.</text>
</comment>
<comment type="subcellular location">
    <subcellularLocation>
        <location evidence="2 4">Secreted</location>
    </subcellularLocation>
</comment>
<comment type="tissue specificity">
    <text evidence="5">Expressed in placenta, specifically the maternal caruncula tissue (MCT) (at protein level).</text>
</comment>
<comment type="similarity">
    <text evidence="4">Belongs to the ALB/AFP/VDB family.</text>
</comment>
<dbReference type="GO" id="GO:0005576">
    <property type="term" value="C:extracellular region"/>
    <property type="evidence" value="ECO:0007669"/>
    <property type="project" value="UniProtKB-SubCell"/>
</dbReference>
<dbReference type="GO" id="GO:0008289">
    <property type="term" value="F:lipid binding"/>
    <property type="evidence" value="ECO:0007669"/>
    <property type="project" value="UniProtKB-KW"/>
</dbReference>
<dbReference type="GO" id="GO:0046872">
    <property type="term" value="F:metal ion binding"/>
    <property type="evidence" value="ECO:0007669"/>
    <property type="project" value="UniProtKB-KW"/>
</dbReference>
<accession>C0HJD2</accession>
<sequence length="10" mass="1193">DTHKSEIAHR</sequence>
<organism>
    <name type="scientific">Dama dama</name>
    <name type="common">Fallow deer</name>
    <name type="synonym">Cervus dama</name>
    <dbReference type="NCBI Taxonomy" id="30532"/>
    <lineage>
        <taxon>Eukaryota</taxon>
        <taxon>Metazoa</taxon>
        <taxon>Chordata</taxon>
        <taxon>Craniata</taxon>
        <taxon>Vertebrata</taxon>
        <taxon>Euteleostomi</taxon>
        <taxon>Mammalia</taxon>
        <taxon>Eutheria</taxon>
        <taxon>Laurasiatheria</taxon>
        <taxon>Artiodactyla</taxon>
        <taxon>Ruminantia</taxon>
        <taxon>Pecora</taxon>
        <taxon>Cervidae</taxon>
        <taxon>Cervinae</taxon>
        <taxon>Dama</taxon>
    </lineage>
</organism>
<protein>
    <recommendedName>
        <fullName evidence="6">Serum albumin</fullName>
    </recommendedName>
</protein>